<accession>A4XHZ5</accession>
<comment type="subunit">
    <text evidence="1">Forms oligomers.</text>
</comment>
<comment type="subcellular location">
    <subcellularLocation>
        <location evidence="1">Cytoplasm</location>
        <location evidence="1">Nucleoid</location>
    </subcellularLocation>
</comment>
<comment type="similarity">
    <text evidence="1">Belongs to the MraZ family.</text>
</comment>
<organism>
    <name type="scientific">Caldicellulosiruptor saccharolyticus (strain ATCC 43494 / DSM 8903 / Tp8T 6331)</name>
    <dbReference type="NCBI Taxonomy" id="351627"/>
    <lineage>
        <taxon>Bacteria</taxon>
        <taxon>Bacillati</taxon>
        <taxon>Bacillota</taxon>
        <taxon>Bacillota incertae sedis</taxon>
        <taxon>Caldicellulosiruptorales</taxon>
        <taxon>Caldicellulosiruptoraceae</taxon>
        <taxon>Caldicellulosiruptor</taxon>
    </lineage>
</organism>
<feature type="chain" id="PRO_1000062861" description="Transcriptional regulator MraZ">
    <location>
        <begin position="1"/>
        <end position="143"/>
    </location>
</feature>
<feature type="domain" description="SpoVT-AbrB 1" evidence="2">
    <location>
        <begin position="5"/>
        <end position="47"/>
    </location>
</feature>
<feature type="domain" description="SpoVT-AbrB 2" evidence="2">
    <location>
        <begin position="76"/>
        <end position="119"/>
    </location>
</feature>
<proteinExistence type="inferred from homology"/>
<protein>
    <recommendedName>
        <fullName>Transcriptional regulator MraZ</fullName>
    </recommendedName>
</protein>
<reference key="1">
    <citation type="submission" date="2007-04" db="EMBL/GenBank/DDBJ databases">
        <title>Genome sequence of the thermophilic hydrogen-producing bacterium Caldicellulosiruptor saccharolyticus DSM 8903.</title>
        <authorList>
            <person name="Copeland A."/>
            <person name="Lucas S."/>
            <person name="Lapidus A."/>
            <person name="Barry K."/>
            <person name="Detter J.C."/>
            <person name="Glavina del Rio T."/>
            <person name="Hammon N."/>
            <person name="Israni S."/>
            <person name="Dalin E."/>
            <person name="Tice H."/>
            <person name="Pitluck S."/>
            <person name="Kiss H."/>
            <person name="Brettin T."/>
            <person name="Bruce D."/>
            <person name="Han C."/>
            <person name="Schmutz J."/>
            <person name="Larimer F."/>
            <person name="Land M."/>
            <person name="Hauser L."/>
            <person name="Kyrpides N."/>
            <person name="Lykidis A."/>
            <person name="van de Werken H.J.G."/>
            <person name="Verhaart M.R.A."/>
            <person name="VanFossen A.L."/>
            <person name="Lewis D.L."/>
            <person name="Nichols J.D."/>
            <person name="Goorissen H.P."/>
            <person name="van Niel E.W.J."/>
            <person name="Stams F.J.M."/>
            <person name="Willquist K.U."/>
            <person name="Ward D.E."/>
            <person name="van der Oost J."/>
            <person name="Kelly R.M."/>
            <person name="Kengen S.M.W."/>
            <person name="Richardson P."/>
        </authorList>
    </citation>
    <scope>NUCLEOTIDE SEQUENCE [LARGE SCALE GENOMIC DNA]</scope>
    <source>
        <strain>ATCC 43494 / DSM 8903 / Tp8T 6331</strain>
    </source>
</reference>
<gene>
    <name evidence="1" type="primary">mraZ</name>
    <name type="ordered locus">Csac_0916</name>
</gene>
<keyword id="KW-0963">Cytoplasm</keyword>
<keyword id="KW-0238">DNA-binding</keyword>
<keyword id="KW-0677">Repeat</keyword>
<keyword id="KW-0804">Transcription</keyword>
<keyword id="KW-0805">Transcription regulation</keyword>
<name>MRAZ_CALS8</name>
<dbReference type="EMBL" id="CP000679">
    <property type="protein sequence ID" value="ABP66530.1"/>
    <property type="molecule type" value="Genomic_DNA"/>
</dbReference>
<dbReference type="RefSeq" id="WP_011916476.1">
    <property type="nucleotide sequence ID" value="NC_009437.1"/>
</dbReference>
<dbReference type="SMR" id="A4XHZ5"/>
<dbReference type="STRING" id="351627.Csac_0916"/>
<dbReference type="KEGG" id="csc:Csac_0916"/>
<dbReference type="eggNOG" id="COG2001">
    <property type="taxonomic scope" value="Bacteria"/>
</dbReference>
<dbReference type="HOGENOM" id="CLU_107907_0_5_9"/>
<dbReference type="OrthoDB" id="9807753at2"/>
<dbReference type="Proteomes" id="UP000000256">
    <property type="component" value="Chromosome"/>
</dbReference>
<dbReference type="GO" id="GO:0005737">
    <property type="term" value="C:cytoplasm"/>
    <property type="evidence" value="ECO:0007669"/>
    <property type="project" value="UniProtKB-UniRule"/>
</dbReference>
<dbReference type="GO" id="GO:0009295">
    <property type="term" value="C:nucleoid"/>
    <property type="evidence" value="ECO:0007669"/>
    <property type="project" value="UniProtKB-SubCell"/>
</dbReference>
<dbReference type="GO" id="GO:0003700">
    <property type="term" value="F:DNA-binding transcription factor activity"/>
    <property type="evidence" value="ECO:0007669"/>
    <property type="project" value="UniProtKB-UniRule"/>
</dbReference>
<dbReference type="GO" id="GO:0000976">
    <property type="term" value="F:transcription cis-regulatory region binding"/>
    <property type="evidence" value="ECO:0007669"/>
    <property type="project" value="TreeGrafter"/>
</dbReference>
<dbReference type="GO" id="GO:2000143">
    <property type="term" value="P:negative regulation of DNA-templated transcription initiation"/>
    <property type="evidence" value="ECO:0007669"/>
    <property type="project" value="TreeGrafter"/>
</dbReference>
<dbReference type="CDD" id="cd16321">
    <property type="entry name" value="MraZ_C"/>
    <property type="match status" value="1"/>
</dbReference>
<dbReference type="CDD" id="cd16320">
    <property type="entry name" value="MraZ_N"/>
    <property type="match status" value="1"/>
</dbReference>
<dbReference type="FunFam" id="3.40.1550.20:FF:000002">
    <property type="entry name" value="Transcriptional regulator MraZ"/>
    <property type="match status" value="1"/>
</dbReference>
<dbReference type="Gene3D" id="3.40.1550.20">
    <property type="entry name" value="Transcriptional regulator MraZ domain"/>
    <property type="match status" value="1"/>
</dbReference>
<dbReference type="HAMAP" id="MF_01008">
    <property type="entry name" value="MraZ"/>
    <property type="match status" value="1"/>
</dbReference>
<dbReference type="InterPro" id="IPR003444">
    <property type="entry name" value="MraZ"/>
</dbReference>
<dbReference type="InterPro" id="IPR035644">
    <property type="entry name" value="MraZ_C"/>
</dbReference>
<dbReference type="InterPro" id="IPR020603">
    <property type="entry name" value="MraZ_dom"/>
</dbReference>
<dbReference type="InterPro" id="IPR035642">
    <property type="entry name" value="MraZ_N"/>
</dbReference>
<dbReference type="InterPro" id="IPR038619">
    <property type="entry name" value="MraZ_sf"/>
</dbReference>
<dbReference type="InterPro" id="IPR007159">
    <property type="entry name" value="SpoVT-AbrB_dom"/>
</dbReference>
<dbReference type="InterPro" id="IPR037914">
    <property type="entry name" value="SpoVT-AbrB_sf"/>
</dbReference>
<dbReference type="NCBIfam" id="TIGR00242">
    <property type="entry name" value="division/cell wall cluster transcriptional repressor MraZ"/>
    <property type="match status" value="1"/>
</dbReference>
<dbReference type="PANTHER" id="PTHR34701">
    <property type="entry name" value="TRANSCRIPTIONAL REGULATOR MRAZ"/>
    <property type="match status" value="1"/>
</dbReference>
<dbReference type="PANTHER" id="PTHR34701:SF1">
    <property type="entry name" value="TRANSCRIPTIONAL REGULATOR MRAZ"/>
    <property type="match status" value="1"/>
</dbReference>
<dbReference type="Pfam" id="PF02381">
    <property type="entry name" value="MraZ"/>
    <property type="match status" value="2"/>
</dbReference>
<dbReference type="SUPFAM" id="SSF89447">
    <property type="entry name" value="AbrB/MazE/MraZ-like"/>
    <property type="match status" value="1"/>
</dbReference>
<dbReference type="PROSITE" id="PS51740">
    <property type="entry name" value="SPOVT_ABRB"/>
    <property type="match status" value="2"/>
</dbReference>
<evidence type="ECO:0000255" key="1">
    <source>
        <dbReference type="HAMAP-Rule" id="MF_01008"/>
    </source>
</evidence>
<evidence type="ECO:0000255" key="2">
    <source>
        <dbReference type="PROSITE-ProRule" id="PRU01076"/>
    </source>
</evidence>
<sequence length="143" mass="16647">MLIGEYKHVVDNKGRVTLPSKFREELGEKFILTKGLDNCLFGYSLKEWAVLEEKLKKLPLTSKDARAFLRFFFAGACECEVDKQGRILIPQNLREYANLQKEVFIIGVMTRIEIWSEENWQREMADESLSVEKIAQKMEELGI</sequence>